<proteinExistence type="evidence at protein level"/>
<comment type="function">
    <text evidence="1 2 6">Nonribosomal peptide synthetase; part of the gene cluster that mediates the biosynthesis of pyrrolopyrazines, secondary metabolites showing insecticidal activity (PubMed:30452111). The single multifunctional NRPS ppzA is responsible for the biosynthesis of peramine (PubMed:30452111). The condensation domain of ppzA is proposed to catalyze formation of a peptide bond between 1-pyrroline-5-carboxylate and arginine. The methylation domain of ppzA would catalyze the N-methylation of the alpha-amino group of arginine. The reductase domain is proposed to be responsible for reduction of the thioester and the cyclization to form an iminium ion resulting in release from the peptide synthetase. Deprotonation of this intermediate and oxidation of the pyrroline ring would give rise to peramine. This final oxidation to give the pyrrole functionality may be spontaneous (By similarity). In Epichloe species that produce only peramine, the peramine synthetase gene is not localized in a gene cluster, in contrast to Metarhizium species that contain additional pyrrolopyrazine biosynthesis genes. The 2-oxoglutarate-Fe(II) type oxidoreductase ppzC hydroxylates peramine to yield the newly identified compound 8-hydroxyperamine whereas ppzD converts L-proline into trans-4-hydroxy-L-proline, a precursor of peramine biosynthesis (By similarity).</text>
</comment>
<comment type="catalytic activity">
    <reaction evidence="6">
        <text>(S)-1-pyrroline-5-carboxylate + L-arginine + S-adenosyl-L-methionine + 2 ATP = peramine + 2 AMP + S-adenosyl-L-homocysteine + 2 diphosphate + H2O + 2 H(+)</text>
        <dbReference type="Rhea" id="RHEA:82151"/>
        <dbReference type="ChEBI" id="CHEBI:15377"/>
        <dbReference type="ChEBI" id="CHEBI:15378"/>
        <dbReference type="ChEBI" id="CHEBI:17388"/>
        <dbReference type="ChEBI" id="CHEBI:30616"/>
        <dbReference type="ChEBI" id="CHEBI:32682"/>
        <dbReference type="ChEBI" id="CHEBI:33019"/>
        <dbReference type="ChEBI" id="CHEBI:57856"/>
        <dbReference type="ChEBI" id="CHEBI:59789"/>
        <dbReference type="ChEBI" id="CHEBI:232088"/>
        <dbReference type="ChEBI" id="CHEBI:456215"/>
    </reaction>
    <physiologicalReaction direction="left-to-right" evidence="6">
        <dbReference type="Rhea" id="RHEA:82152"/>
    </physiologicalReaction>
</comment>
<comment type="cofactor">
    <cofactor evidence="4">
        <name>pantetheine 4'-phosphate</name>
        <dbReference type="ChEBI" id="CHEBI:47942"/>
    </cofactor>
</comment>
<comment type="pathway">
    <text evidence="6">Secondary metabolite biosynthesis.</text>
</comment>
<comment type="domain">
    <text evidence="9">NRP synthetases are composed of discrete domains (adenylation (A), thiolation (T) or peptidyl carrier protein (PCP) and condensation (C) domains) which when grouped together are referred to as a single module. Each module is responsible for the recognition (via the A domain) and incorporation of a single amino acid into the growing peptide product. Thus, an NRP synthetase is generally composed of one or more modules and can terminate in a thioesterase domain (TE) that releases the newly synthesized peptide from the enzyme. Occasionally, methyltransferase domains (responsible for amino acid methylation) are present within the NRP synthetase. PpzA has the following architecture: A-T-C-A-Met-T-TE.</text>
</comment>
<comment type="similarity">
    <text evidence="8">Belongs to the NRP synthetase family.</text>
</comment>
<reference key="1">
    <citation type="journal article" date="2016" name="Genome Biol. Evol.">
        <title>Divergent and convergent evolution of fungal pathogenicity.</title>
        <authorList>
            <person name="Shang Y."/>
            <person name="Xiao G."/>
            <person name="Zheng P."/>
            <person name="Cen K."/>
            <person name="Zhan S."/>
            <person name="Wang C."/>
        </authorList>
    </citation>
    <scope>NUCLEOTIDE SEQUENCE [LARGE SCALE GENOMIC DNA]</scope>
    <source>
        <strain>RCEF 4871</strain>
    </source>
</reference>
<reference key="2">
    <citation type="journal article" date="2019" name="Environ. Microbiol.">
        <title>Orthologous peramine and pyrrolopyrazine-producing biosynthetic gene clusters in Metarhizium rileyi, Metarhizium majus and Cladonia grayi.</title>
        <authorList>
            <person name="Berry D."/>
            <person name="Mace W."/>
            <person name="Rehner S.A."/>
            <person name="Grage K."/>
            <person name="Dijkwel P.P."/>
            <person name="Young C.A."/>
            <person name="Scott B."/>
        </authorList>
    </citation>
    <scope>FUNCTION</scope>
    <scope>DOMAIN</scope>
    <scope>CATALYTIC ACTIVITY</scope>
    <scope>PATHWAY</scope>
</reference>
<protein>
    <recommendedName>
        <fullName evidence="7">Peramine synthetase ppzA</fullName>
        <ecNumber evidence="6">2.3.2.-</ecNumber>
    </recommendedName>
    <alternativeName>
        <fullName evidence="7">Nonribosomal peptide synthetase ppzA</fullName>
        <shortName evidence="7">NRPS ppzA</shortName>
    </alternativeName>
    <alternativeName>
        <fullName evidence="7">Pyrrolopyrazine biosynthesis cluster protein A</fullName>
    </alternativeName>
</protein>
<name>PERA_METRR</name>
<gene>
    <name evidence="7" type="primary">ppzA</name>
    <name evidence="7" type="synonym">perA</name>
    <name type="ORF">NOR_07095</name>
</gene>
<dbReference type="EC" id="2.3.2.-" evidence="6"/>
<dbReference type="EMBL" id="AZHC01000030">
    <property type="protein sequence ID" value="OAA37396.1"/>
    <property type="molecule type" value="Genomic_DNA"/>
</dbReference>
<dbReference type="SMR" id="A0A166YZW0"/>
<dbReference type="STRING" id="1081105.A0A166YZW0"/>
<dbReference type="OMA" id="CTPISTI"/>
<dbReference type="OrthoDB" id="416786at2759"/>
<dbReference type="Proteomes" id="UP000243498">
    <property type="component" value="Unassembled WGS sequence"/>
</dbReference>
<dbReference type="GO" id="GO:0005737">
    <property type="term" value="C:cytoplasm"/>
    <property type="evidence" value="ECO:0007669"/>
    <property type="project" value="TreeGrafter"/>
</dbReference>
<dbReference type="GO" id="GO:0016874">
    <property type="term" value="F:ligase activity"/>
    <property type="evidence" value="ECO:0007669"/>
    <property type="project" value="UniProtKB-KW"/>
</dbReference>
<dbReference type="GO" id="GO:0008168">
    <property type="term" value="F:methyltransferase activity"/>
    <property type="evidence" value="ECO:0007669"/>
    <property type="project" value="UniProtKB-KW"/>
</dbReference>
<dbReference type="GO" id="GO:0031177">
    <property type="term" value="F:phosphopantetheine binding"/>
    <property type="evidence" value="ECO:0007669"/>
    <property type="project" value="InterPro"/>
</dbReference>
<dbReference type="GO" id="GO:0043041">
    <property type="term" value="P:amino acid activation for nonribosomal peptide biosynthetic process"/>
    <property type="evidence" value="ECO:0007669"/>
    <property type="project" value="TreeGrafter"/>
</dbReference>
<dbReference type="GO" id="GO:0032259">
    <property type="term" value="P:methylation"/>
    <property type="evidence" value="ECO:0007669"/>
    <property type="project" value="UniProtKB-KW"/>
</dbReference>
<dbReference type="GO" id="GO:0009403">
    <property type="term" value="P:toxin biosynthetic process"/>
    <property type="evidence" value="ECO:0007669"/>
    <property type="project" value="UniProtKB-ARBA"/>
</dbReference>
<dbReference type="CDD" id="cd05918">
    <property type="entry name" value="A_NRPS_SidN3_like"/>
    <property type="match status" value="2"/>
</dbReference>
<dbReference type="CDD" id="cd02440">
    <property type="entry name" value="AdoMet_MTases"/>
    <property type="match status" value="1"/>
</dbReference>
<dbReference type="CDD" id="cd19545">
    <property type="entry name" value="FUM14_C_NRPS-like"/>
    <property type="match status" value="1"/>
</dbReference>
<dbReference type="CDD" id="cd05235">
    <property type="entry name" value="SDR_e1"/>
    <property type="match status" value="1"/>
</dbReference>
<dbReference type="FunFam" id="3.30.300.30:FF:000015">
    <property type="entry name" value="Nonribosomal peptide synthase SidD"/>
    <property type="match status" value="1"/>
</dbReference>
<dbReference type="FunFam" id="3.30.559.30:FF:000003">
    <property type="entry name" value="Nonribosomal peptide synthase SidD"/>
    <property type="match status" value="1"/>
</dbReference>
<dbReference type="FunFam" id="1.10.1200.10:FF:000005">
    <property type="entry name" value="Nonribosomal peptide synthetase 1"/>
    <property type="match status" value="1"/>
</dbReference>
<dbReference type="FunFam" id="3.40.50.12780:FF:000014">
    <property type="entry name" value="Nonribosomal peptide synthetase 1"/>
    <property type="match status" value="2"/>
</dbReference>
<dbReference type="Gene3D" id="3.30.300.30">
    <property type="match status" value="3"/>
</dbReference>
<dbReference type="Gene3D" id="1.10.1200.10">
    <property type="entry name" value="ACP-like"/>
    <property type="match status" value="2"/>
</dbReference>
<dbReference type="Gene3D" id="3.30.559.10">
    <property type="entry name" value="Chloramphenicol acetyltransferase-like domain"/>
    <property type="match status" value="1"/>
</dbReference>
<dbReference type="Gene3D" id="3.40.50.12780">
    <property type="entry name" value="N-terminal domain of ligase-like"/>
    <property type="match status" value="2"/>
</dbReference>
<dbReference type="Gene3D" id="3.40.50.720">
    <property type="entry name" value="NAD(P)-binding Rossmann-like Domain"/>
    <property type="match status" value="1"/>
</dbReference>
<dbReference type="Gene3D" id="3.30.559.30">
    <property type="entry name" value="Nonribosomal peptide synthetase, condensation domain"/>
    <property type="match status" value="2"/>
</dbReference>
<dbReference type="Gene3D" id="3.40.50.150">
    <property type="entry name" value="Vaccinia Virus protein VP39"/>
    <property type="match status" value="1"/>
</dbReference>
<dbReference type="InterPro" id="IPR010071">
    <property type="entry name" value="AA_adenyl_dom"/>
</dbReference>
<dbReference type="InterPro" id="IPR036736">
    <property type="entry name" value="ACP-like_sf"/>
</dbReference>
<dbReference type="InterPro" id="IPR045851">
    <property type="entry name" value="AMP-bd_C_sf"/>
</dbReference>
<dbReference type="InterPro" id="IPR000873">
    <property type="entry name" value="AMP-dep_synth/lig_dom"/>
</dbReference>
<dbReference type="InterPro" id="IPR042099">
    <property type="entry name" value="ANL_N_sf"/>
</dbReference>
<dbReference type="InterPro" id="IPR023213">
    <property type="entry name" value="CAT-like_dom_sf"/>
</dbReference>
<dbReference type="InterPro" id="IPR001242">
    <property type="entry name" value="Condensatn"/>
</dbReference>
<dbReference type="InterPro" id="IPR013120">
    <property type="entry name" value="Far_NAD-bd"/>
</dbReference>
<dbReference type="InterPro" id="IPR013217">
    <property type="entry name" value="Methyltransf_12"/>
</dbReference>
<dbReference type="InterPro" id="IPR036291">
    <property type="entry name" value="NAD(P)-bd_dom_sf"/>
</dbReference>
<dbReference type="InterPro" id="IPR020806">
    <property type="entry name" value="PKS_PP-bd"/>
</dbReference>
<dbReference type="InterPro" id="IPR009081">
    <property type="entry name" value="PP-bd_ACP"/>
</dbReference>
<dbReference type="InterPro" id="IPR006162">
    <property type="entry name" value="Ppantetheine_attach_site"/>
</dbReference>
<dbReference type="InterPro" id="IPR029063">
    <property type="entry name" value="SAM-dependent_MTases_sf"/>
</dbReference>
<dbReference type="InterPro" id="IPR010080">
    <property type="entry name" value="Thioester_reductase-like_dom"/>
</dbReference>
<dbReference type="NCBIfam" id="TIGR01733">
    <property type="entry name" value="AA-adenyl-dom"/>
    <property type="match status" value="2"/>
</dbReference>
<dbReference type="NCBIfam" id="TIGR01746">
    <property type="entry name" value="Thioester-redct"/>
    <property type="match status" value="1"/>
</dbReference>
<dbReference type="PANTHER" id="PTHR45527:SF1">
    <property type="entry name" value="FATTY ACID SYNTHASE"/>
    <property type="match status" value="1"/>
</dbReference>
<dbReference type="PANTHER" id="PTHR45527">
    <property type="entry name" value="NONRIBOSOMAL PEPTIDE SYNTHETASE"/>
    <property type="match status" value="1"/>
</dbReference>
<dbReference type="Pfam" id="PF00501">
    <property type="entry name" value="AMP-binding"/>
    <property type="match status" value="2"/>
</dbReference>
<dbReference type="Pfam" id="PF00668">
    <property type="entry name" value="Condensation"/>
    <property type="match status" value="1"/>
</dbReference>
<dbReference type="Pfam" id="PF08242">
    <property type="entry name" value="Methyltransf_12"/>
    <property type="match status" value="1"/>
</dbReference>
<dbReference type="Pfam" id="PF07993">
    <property type="entry name" value="NAD_binding_4"/>
    <property type="match status" value="1"/>
</dbReference>
<dbReference type="Pfam" id="PF00550">
    <property type="entry name" value="PP-binding"/>
    <property type="match status" value="2"/>
</dbReference>
<dbReference type="SMART" id="SM00823">
    <property type="entry name" value="PKS_PP"/>
    <property type="match status" value="2"/>
</dbReference>
<dbReference type="SMART" id="SM01294">
    <property type="entry name" value="PKS_PP_betabranch"/>
    <property type="match status" value="1"/>
</dbReference>
<dbReference type="SUPFAM" id="SSF56801">
    <property type="entry name" value="Acetyl-CoA synthetase-like"/>
    <property type="match status" value="2"/>
</dbReference>
<dbReference type="SUPFAM" id="SSF47336">
    <property type="entry name" value="ACP-like"/>
    <property type="match status" value="2"/>
</dbReference>
<dbReference type="SUPFAM" id="SSF52777">
    <property type="entry name" value="CoA-dependent acyltransferases"/>
    <property type="match status" value="3"/>
</dbReference>
<dbReference type="SUPFAM" id="SSF51735">
    <property type="entry name" value="NAD(P)-binding Rossmann-fold domains"/>
    <property type="match status" value="1"/>
</dbReference>
<dbReference type="SUPFAM" id="SSF53335">
    <property type="entry name" value="S-adenosyl-L-methionine-dependent methyltransferases"/>
    <property type="match status" value="1"/>
</dbReference>
<dbReference type="PROSITE" id="PS50075">
    <property type="entry name" value="CARRIER"/>
    <property type="match status" value="1"/>
</dbReference>
<dbReference type="PROSITE" id="PS00012">
    <property type="entry name" value="PHOSPHOPANTETHEINE"/>
    <property type="match status" value="2"/>
</dbReference>
<keyword id="KW-0436">Ligase</keyword>
<keyword id="KW-0489">Methyltransferase</keyword>
<keyword id="KW-0511">Multifunctional enzyme</keyword>
<keyword id="KW-0596">Phosphopantetheine</keyword>
<keyword id="KW-0597">Phosphoprotein</keyword>
<keyword id="KW-1185">Reference proteome</keyword>
<keyword id="KW-0677">Repeat</keyword>
<keyword id="KW-0808">Transferase</keyword>
<organism>
    <name type="scientific">Metarhizium rileyi (strain RCEF 4871)</name>
    <name type="common">Nomuraea rileyi</name>
    <dbReference type="NCBI Taxonomy" id="1649241"/>
    <lineage>
        <taxon>Eukaryota</taxon>
        <taxon>Fungi</taxon>
        <taxon>Dikarya</taxon>
        <taxon>Ascomycota</taxon>
        <taxon>Pezizomycotina</taxon>
        <taxon>Sordariomycetes</taxon>
        <taxon>Hypocreomycetidae</taxon>
        <taxon>Hypocreales</taxon>
        <taxon>Clavicipitaceae</taxon>
        <taxon>Metarhizium</taxon>
    </lineage>
</organism>
<accession>A0A166YZW0</accession>
<feature type="chain" id="PRO_0000450255" description="Peramine synthetase ppzA">
    <location>
        <begin position="1"/>
        <end position="2879"/>
    </location>
</feature>
<feature type="domain" description="Carrier 1" evidence="4">
    <location>
        <begin position="882"/>
        <end position="958"/>
    </location>
</feature>
<feature type="domain" description="Carrier 2" evidence="4">
    <location>
        <begin position="2370"/>
        <end position="2448"/>
    </location>
</feature>
<feature type="region of interest" description="Disordered" evidence="5">
    <location>
        <begin position="1"/>
        <end position="52"/>
    </location>
</feature>
<feature type="region of interest" description="Adenylation 1" evidence="3 9">
    <location>
        <begin position="351"/>
        <end position="747"/>
    </location>
</feature>
<feature type="region of interest" description="Condensation" evidence="3 9">
    <location>
        <begin position="997"/>
        <end position="1410"/>
    </location>
</feature>
<feature type="region of interest" description="Adenylation 2" evidence="3 9">
    <location>
        <begin position="1433"/>
        <end position="1827"/>
    </location>
</feature>
<feature type="region of interest" description="Methylation (Met) domain" evidence="3 9">
    <location>
        <begin position="1958"/>
        <end position="2050"/>
    </location>
</feature>
<feature type="region of interest" description="Thiesterase (TE) domain" evidence="3 9">
    <location>
        <begin position="2500"/>
        <end position="2817"/>
    </location>
</feature>
<feature type="compositionally biased region" description="Basic and acidic residues" evidence="5">
    <location>
        <begin position="1"/>
        <end position="12"/>
    </location>
</feature>
<feature type="compositionally biased region" description="Polar residues" evidence="5">
    <location>
        <begin position="16"/>
        <end position="34"/>
    </location>
</feature>
<feature type="modified residue" description="O-(pantetheine 4'-phosphoryl)serine" evidence="4">
    <location>
        <position position="919"/>
    </location>
</feature>
<feature type="modified residue" description="O-(pantetheine 4'-phosphoryl)serine" evidence="4">
    <location>
        <position position="2407"/>
    </location>
</feature>
<evidence type="ECO:0000250" key="1">
    <source>
        <dbReference type="UniProtKB" id="A0A455ZJD4"/>
    </source>
</evidence>
<evidence type="ECO:0000250" key="2">
    <source>
        <dbReference type="UniProtKB" id="Q4H424"/>
    </source>
</evidence>
<evidence type="ECO:0000255" key="3"/>
<evidence type="ECO:0000255" key="4">
    <source>
        <dbReference type="PROSITE-ProRule" id="PRU00258"/>
    </source>
</evidence>
<evidence type="ECO:0000256" key="5">
    <source>
        <dbReference type="SAM" id="MobiDB-lite"/>
    </source>
</evidence>
<evidence type="ECO:0000269" key="6">
    <source>
    </source>
</evidence>
<evidence type="ECO:0000303" key="7">
    <source>
    </source>
</evidence>
<evidence type="ECO:0000305" key="8"/>
<evidence type="ECO:0000305" key="9">
    <source>
    </source>
</evidence>
<sequence>MTYDEGGHRNNEETPQDVNMSSNNEGMSTSSPTGSYGEIIGQATVSVPQEDQEKLTPLNELSGLYAERESYQSPLCPSTTKMISETVRKSSADDGYTSFPIRSTLIDRPVLDKTLRCEFALFPPFCDIQRLSTLSNASWALIAGHLTNSTKVIVGIPAFGESTSVHNIESGTALQPAPIPLLIDWRPEQSVMDYLKHVQSRIADVTTLGGAGSQLLTSGYPVNYNAGHLQTLIVVETNEISPGSINGTREVQLRQYDYKKKYACAALVIEIRLQKTGIVAVASFDTRALGPSLVYNLLKRLEYVMEQLFRVSSDHVLADIDMVTSEDLEQIWQWNDPIPAPVERCMHEMVQEQCRLQPNTLAVDAWDGRLTYRELDQLSNRLACHLVDRGVEPDMFVPLCFHKSMWMPVTAMGVLKAGGAFVLLEPSFPEQRLRAIVEETEASIVLASSTTMALSLRLLDNVIQVDSELFNCLTFSANRLPQLQPSSSAMFGVFTSGSTGKPKGAVLTHANYCSALTYQLDLLGFKKDSRVFDFASYAFDVSVHNIFASLASGACLCIPSEEKRLEDICKSISDMRATIVHLTPSVARLIQPEKVPLLQTVIFTGEPLSVEDVEQWWGKTNIVNEYGPAECSINTINSNPSSPEEATLIGKGVGVAVWIVDPSNHDLLVPIGSVGELLIEGALVGRGYINETEKNAAAFIENPKWLLHGRPGRPGRQGRLYKTGDLVKYGENGNLAFVGRKDTQVKIYGQRVDLREVEHWIQSCGQGAGQVVAEMIAPRADDHDPAPALVAFLRNEHTALDGSLCPNSTEAILRPVPDEVEARLSKHLPNYMVPKVFIVLSKFPMTATGKTDRMQLRKIGSSFSLEQLAEVRAKTWAGPKRQPLSDMERLLCDVWSKVLGLERRSIGPESNFFHLGGDSIAAMKSVGEARKSGIKVAVADVFRHPSLQDLSRQSKYIEDNSLDHIKPFELLGEEFNRLAFLKDASHQYGIDPSAIYDAYPCTPLQEGLMSLTAKRPGDYIEQMILELGEDVKIDNLWAAWKHVACVTPILRTRLVHHNDLGLMQLVIEEDTSWTDATGLDEYLDADRKRSMNLGEPLSRYGLVRDETGEPKWFVWSIHHAIYDGWSVQLILDAAYRAYSGQEVEQGPQFQEFIKYVQQQRHQNQKRVVEYWQKTLEGFEGAQFPPVVPSVQQPVANTAVRHCIPNPPNGRVGVTMSMLIRAAWALVVGRMANSDDVVYGSTLYGRNASVAGLDELAAPTIATVPLRIRLSSKKTVSEYLEAIQREATTMIPFEQTGLQEIAQMSDSCRMACKFQTLLVIQPEEHSQGKGPLGTWQVRSQEQWFSTYPLTLELWLGTDHITASAMFDSRIIESWVVRKMLQRLEGVMYQLNHATSSQLLGDITILTTEDLEQIWEWNKTIPTPVNRCVHEIIHDKVQHRPNAPAICAWDGEITYSELNRLADKLSGRLTELGVGPHLLVPLCFEKSLWTAVAILGVIKSGGGFVLLDASLPEQRLRSIMKQIKGDLVITCPSQQALCSRLGAETITLSWGFFSTLKDYEAGLQIQSYSPSSILYAVFTSGSTGIPKGVLITHANMASALYYQSEVMGLSEDSRLYDFASYSFDVAISNMFTVLAAGGCLCVPSEEHRKNNLEGSIISLRANALDLTPSIAQLLSPARLPNVRSLTLGGEPVLATAVEQWFGKLQIRNAYGPSECTPTCIVNHNPSSPEQATEIGNGVGIVTWVVDPSNHEVLLPPGCTGELLLEGPLVGPGYLDDGEKTAAAFVHDPVWLTKGTHNRSGRHGLLYKTGDLAKYHENGTLSFVRRKDTTQIKLRGQRVELGEVEHILRSHSCVIDAVAASQCDDKLGAWIAGFVTIRADGQKEHQGDEEYEQQQIQSWEDQFDGETYTSIEEIPREAIGRDFIGWTSMYDGSDLDKGEMNEWLNDTINTILDGGPAGHVLEIGCGSGMMLFNLANKGLQSYIGIEPSKRAVDATASIVKSIPHLKERVRIVKGTGEDLQQLGTPISPDLVVINSVIQYFPSQKYLVKLIQDILELRSVQTIFFGDVRSHALHKEFLALRALSIVGETASREEIGQVLSNLHRAEPELLLDPEFFTSLPARLPGHIAHVEILPKKMEATNELSSFRYGAVVHVDLKHGQIRDIDAKSWVSYTSQGLDCKSLLALLKDWPHAADTIAISDIPHSKTVFATKLIDELENGASEARHGRHWAEFIRQDAKQCCALSAIDLVKLAKEAGYRAEVSWARQYSQRGGLDAVFHRFITDNDARRVLFRFPIDHTNRPFHLLSSKPLRRRAEMNIQRELEARLRCQLPSHMIPQTITILDRMPISHNGKVDRQILADSVQRQWTGQERKRWPTTDTGKELQRIWSHVLNISPDSIGLDDGFVHFGGNSLHAMKIVHMARQAGINLKVTDMFRHSETTIGRLLLDCCCDDTPGKSTSADPVHWTYLMAAIDEKDKCLAAIQAGAKPRLVDGDIQADPDELFTVLLTGANGFIGTQILRQLLEHGRVDRVICIVRGESTSVARHRTIEAAQKALWWTEFHQEMLEVWPGDLSAPRLGLDDAKWRLLAEGKAVNIIIHNGASVNFVKGYAALEAVNVNSTVEMMSVVTRNPGMRFIYVSSARSQDPMEEEEEDMARVLTENPNGYNQTKFVAEALVRRAASRSSPRQHQFMVVSPGLVVGTPTEGVANADDWLWRMAAACIRVGVYNVDDSDKWIPLCDVGTIAAVIIHAALGHPSSSTTVTQVRGGLTMGEFWETLATAGYPLTGTRVAECTAAIREDILANREKHPLGVLEDMLQDLDDTTNVQWAASWRKNGLCSPARLKAALCKSAEFLSGVSFLPLPNFVRERLVQETSMSAFTRSGF</sequence>